<organism>
    <name type="scientific">Bacillus licheniformis (strain ATCC 14580 / DSM 13 / JCM 2505 / CCUG 7422 / NBRC 12200 / NCIMB 9375 / NCTC 10341 / NRRL NRS-1264 / Gibson 46)</name>
    <dbReference type="NCBI Taxonomy" id="279010"/>
    <lineage>
        <taxon>Bacteria</taxon>
        <taxon>Bacillati</taxon>
        <taxon>Bacillota</taxon>
        <taxon>Bacilli</taxon>
        <taxon>Bacillales</taxon>
        <taxon>Bacillaceae</taxon>
        <taxon>Bacillus</taxon>
    </lineage>
</organism>
<comment type="function">
    <text evidence="1">Catalyzes the conversion of L-arabinose to L-ribulose.</text>
</comment>
<comment type="catalytic activity">
    <reaction evidence="1">
        <text>beta-L-arabinopyranose = L-ribulose</text>
        <dbReference type="Rhea" id="RHEA:14821"/>
        <dbReference type="ChEBI" id="CHEBI:16880"/>
        <dbReference type="ChEBI" id="CHEBI:40886"/>
        <dbReference type="EC" id="5.3.1.4"/>
    </reaction>
</comment>
<comment type="cofactor">
    <cofactor evidence="1">
        <name>Mn(2+)</name>
        <dbReference type="ChEBI" id="CHEBI:29035"/>
    </cofactor>
    <text evidence="1">Binds 1 Mn(2+) ion per subunit.</text>
</comment>
<comment type="pathway">
    <text evidence="1">Carbohydrate degradation; L-arabinose degradation via L-ribulose; D-xylulose 5-phosphate from L-arabinose (bacterial route): step 1/3.</text>
</comment>
<comment type="similarity">
    <text evidence="1">Belongs to the arabinose isomerase family.</text>
</comment>
<keyword id="KW-0054">Arabinose catabolism</keyword>
<keyword id="KW-0119">Carbohydrate metabolism</keyword>
<keyword id="KW-0413">Isomerase</keyword>
<keyword id="KW-0464">Manganese</keyword>
<keyword id="KW-0479">Metal-binding</keyword>
<keyword id="KW-1185">Reference proteome</keyword>
<feature type="chain" id="PRO_0000259335" description="L-arabinose isomerase 1">
    <location>
        <begin position="1"/>
        <end position="493"/>
    </location>
</feature>
<feature type="binding site" evidence="1">
    <location>
        <position position="301"/>
    </location>
    <ligand>
        <name>Mn(2+)</name>
        <dbReference type="ChEBI" id="CHEBI:29035"/>
    </ligand>
</feature>
<feature type="binding site" evidence="1">
    <location>
        <position position="326"/>
    </location>
    <ligand>
        <name>Mn(2+)</name>
        <dbReference type="ChEBI" id="CHEBI:29035"/>
    </ligand>
</feature>
<feature type="binding site" evidence="1">
    <location>
        <position position="343"/>
    </location>
    <ligand>
        <name>Mn(2+)</name>
        <dbReference type="ChEBI" id="CHEBI:29035"/>
    </ligand>
</feature>
<feature type="binding site" evidence="1">
    <location>
        <position position="442"/>
    </location>
    <ligand>
        <name>Mn(2+)</name>
        <dbReference type="ChEBI" id="CHEBI:29035"/>
    </ligand>
</feature>
<reference key="1">
    <citation type="journal article" date="2004" name="J. Mol. Microbiol. Biotechnol.">
        <title>The complete genome sequence of Bacillus licheniformis DSM13, an organism with great industrial potential.</title>
        <authorList>
            <person name="Veith B."/>
            <person name="Herzberg C."/>
            <person name="Steckel S."/>
            <person name="Feesche J."/>
            <person name="Maurer K.H."/>
            <person name="Ehrenreich P."/>
            <person name="Baeumer S."/>
            <person name="Henne A."/>
            <person name="Liesegang H."/>
            <person name="Merkl R."/>
            <person name="Ehrenreich A."/>
            <person name="Gottschalk G."/>
        </authorList>
    </citation>
    <scope>NUCLEOTIDE SEQUENCE [LARGE SCALE GENOMIC DNA]</scope>
    <source>
        <strain>ATCC 14580 / DSM 13 / JCM 2505 / CCUG 7422 / NBRC 12200 / NCIMB 9375 / NCTC 10341 / NRRL NRS-1264 / Gibson 46</strain>
    </source>
</reference>
<reference key="2">
    <citation type="journal article" date="2004" name="Genome Biol.">
        <title>Complete genome sequence of the industrial bacterium Bacillus licheniformis and comparisons with closely related Bacillus species.</title>
        <authorList>
            <person name="Rey M.W."/>
            <person name="Ramaiya P."/>
            <person name="Nelson B.A."/>
            <person name="Brody-Karpin S.D."/>
            <person name="Zaretsky E.J."/>
            <person name="Tang M."/>
            <person name="Lopez de Leon A."/>
            <person name="Xiang H."/>
            <person name="Gusti V."/>
            <person name="Clausen I.G."/>
            <person name="Olsen P.B."/>
            <person name="Rasmussen M.D."/>
            <person name="Andersen J.T."/>
            <person name="Joergensen P.L."/>
            <person name="Larsen T.S."/>
            <person name="Sorokin A."/>
            <person name="Bolotin A."/>
            <person name="Lapidus A."/>
            <person name="Galleron N."/>
            <person name="Ehrlich S.D."/>
            <person name="Berka R.M."/>
        </authorList>
    </citation>
    <scope>NUCLEOTIDE SEQUENCE [LARGE SCALE GENOMIC DNA]</scope>
    <source>
        <strain>ATCC 14580 / DSM 13 / JCM 2505 / CCUG 7422 / NBRC 12200 / NCIMB 9375 / NCTC 10341 / NRRL NRS-1264 / Gibson 46</strain>
    </source>
</reference>
<proteinExistence type="inferred from homology"/>
<dbReference type="EC" id="5.3.1.4" evidence="1"/>
<dbReference type="EMBL" id="AE017333">
    <property type="protein sequence ID" value="AAU41894.1"/>
    <property type="molecule type" value="Genomic_DNA"/>
</dbReference>
<dbReference type="EMBL" id="CP000002">
    <property type="protein sequence ID" value="AAU24535.1"/>
    <property type="molecule type" value="Genomic_DNA"/>
</dbReference>
<dbReference type="SMR" id="Q65GC0"/>
<dbReference type="STRING" id="279010.BL00352"/>
<dbReference type="KEGG" id="bld:BLi03028"/>
<dbReference type="KEGG" id="bli:BL00352"/>
<dbReference type="PATRIC" id="fig|279010.13.peg.3090"/>
<dbReference type="eggNOG" id="COG2160">
    <property type="taxonomic scope" value="Bacteria"/>
</dbReference>
<dbReference type="HOGENOM" id="CLU_045663_0_0_9"/>
<dbReference type="UniPathway" id="UPA00145">
    <property type="reaction ID" value="UER00565"/>
</dbReference>
<dbReference type="Proteomes" id="UP000000606">
    <property type="component" value="Chromosome"/>
</dbReference>
<dbReference type="GO" id="GO:0005829">
    <property type="term" value="C:cytosol"/>
    <property type="evidence" value="ECO:0007669"/>
    <property type="project" value="TreeGrafter"/>
</dbReference>
<dbReference type="GO" id="GO:0008733">
    <property type="term" value="F:L-arabinose isomerase activity"/>
    <property type="evidence" value="ECO:0007669"/>
    <property type="project" value="UniProtKB-UniRule"/>
</dbReference>
<dbReference type="GO" id="GO:0030145">
    <property type="term" value="F:manganese ion binding"/>
    <property type="evidence" value="ECO:0007669"/>
    <property type="project" value="UniProtKB-UniRule"/>
</dbReference>
<dbReference type="GO" id="GO:0019569">
    <property type="term" value="P:L-arabinose catabolic process to xylulose 5-phosphate"/>
    <property type="evidence" value="ECO:0007669"/>
    <property type="project" value="UniProtKB-UniRule"/>
</dbReference>
<dbReference type="CDD" id="cd03557">
    <property type="entry name" value="L-arabinose_isomerase"/>
    <property type="match status" value="1"/>
</dbReference>
<dbReference type="Gene3D" id="3.40.50.10940">
    <property type="match status" value="1"/>
</dbReference>
<dbReference type="HAMAP" id="MF_00519">
    <property type="entry name" value="Arabinose_Isome"/>
    <property type="match status" value="1"/>
</dbReference>
<dbReference type="InterPro" id="IPR024664">
    <property type="entry name" value="Ara_Isoase_C"/>
</dbReference>
<dbReference type="InterPro" id="IPR055390">
    <property type="entry name" value="AraA_central"/>
</dbReference>
<dbReference type="InterPro" id="IPR055389">
    <property type="entry name" value="AraA_N"/>
</dbReference>
<dbReference type="InterPro" id="IPR038583">
    <property type="entry name" value="AraA_N_sf"/>
</dbReference>
<dbReference type="InterPro" id="IPR004216">
    <property type="entry name" value="Fuc/Ara_isomerase_C"/>
</dbReference>
<dbReference type="InterPro" id="IPR009015">
    <property type="entry name" value="Fucose_isomerase_N/cen_sf"/>
</dbReference>
<dbReference type="InterPro" id="IPR003762">
    <property type="entry name" value="Lara_isomerase"/>
</dbReference>
<dbReference type="NCBIfam" id="NF002795">
    <property type="entry name" value="PRK02929.1"/>
    <property type="match status" value="1"/>
</dbReference>
<dbReference type="PANTHER" id="PTHR38464">
    <property type="entry name" value="L-ARABINOSE ISOMERASE"/>
    <property type="match status" value="1"/>
</dbReference>
<dbReference type="PANTHER" id="PTHR38464:SF1">
    <property type="entry name" value="L-ARABINOSE ISOMERASE"/>
    <property type="match status" value="1"/>
</dbReference>
<dbReference type="Pfam" id="PF24856">
    <property type="entry name" value="AraA_central"/>
    <property type="match status" value="1"/>
</dbReference>
<dbReference type="Pfam" id="PF02610">
    <property type="entry name" value="AraA_N"/>
    <property type="match status" value="1"/>
</dbReference>
<dbReference type="Pfam" id="PF11762">
    <property type="entry name" value="Arabinose_Iso_C"/>
    <property type="match status" value="1"/>
</dbReference>
<dbReference type="PIRSF" id="PIRSF001478">
    <property type="entry name" value="L-ara_isomerase"/>
    <property type="match status" value="1"/>
</dbReference>
<dbReference type="SUPFAM" id="SSF50443">
    <property type="entry name" value="FucI/AraA C-terminal domain-like"/>
    <property type="match status" value="1"/>
</dbReference>
<dbReference type="SUPFAM" id="SSF53743">
    <property type="entry name" value="FucI/AraA N-terminal and middle domains"/>
    <property type="match status" value="1"/>
</dbReference>
<evidence type="ECO:0000255" key="1">
    <source>
        <dbReference type="HAMAP-Rule" id="MF_00519"/>
    </source>
</evidence>
<accession>Q65GC0</accession>
<accession>Q62RS5</accession>
<protein>
    <recommendedName>
        <fullName evidence="1">L-arabinose isomerase 1</fullName>
        <ecNumber evidence="1">5.3.1.4</ecNumber>
    </recommendedName>
</protein>
<sequence length="493" mass="55647">MIQAKTHVFWFVTGSQHLYGEEAVQEVEEHSKMICNGLNDGDLRFQVEYKAVATSLDGVRKLFEEANRDEECAGIITWMHTFSPAKMWIPGLSELNKPLLHFHTQFNRDIPWDKIDMDFMNINQSAHGDREYGFIGARLGIPRKVIAGYWEDREVKRSIDKWMSAAVAYIESRHIKVARFGDNMRNVAVTEGDKIEAQIQLGWSVDGYGIGDLVTEINAVSEQSLSELISEYEELYEWPEGEAARESVKEQARIELGLKRFLSSGGYTAFTTTFEDLHGMKQLPGLAVQRLMAEGYGFGGEGDWKTAALVRMMKMMAGGKETSFMEDYTYHFEPGNEMILGSHMLEVCPSIAEHKPRIEVHPLSMGAKDDPARLVFDGIAGPAVNVSLIDLGGRFRLVINKVEAVKVPHDMPNLPVARVLWKPQPSLRTSAEAWILAGGAHHTCLSYQLTAEQMLDWAEMSGIEAVLINRDTTILNLRNELKWSEAAYRLRKF</sequence>
<gene>
    <name evidence="1" type="primary">araA1</name>
    <name type="ordered locus">BLi03028</name>
    <name type="ordered locus">BL00352</name>
</gene>
<name>ARAA1_BACLD</name>